<proteinExistence type="evidence at protein level"/>
<accession>A3MUS8</accession>
<dbReference type="EC" id="3.5.1.1" evidence="3"/>
<dbReference type="EMBL" id="CP000561">
    <property type="protein sequence ID" value="ABO08395.1"/>
    <property type="molecule type" value="Genomic_DNA"/>
</dbReference>
<dbReference type="RefSeq" id="WP_011849653.1">
    <property type="nucleotide sequence ID" value="NC_009073.1"/>
</dbReference>
<dbReference type="SMR" id="A3MUS8"/>
<dbReference type="STRING" id="410359.Pcal_0970"/>
<dbReference type="GeneID" id="4908173"/>
<dbReference type="KEGG" id="pcl:Pcal_0970"/>
<dbReference type="eggNOG" id="arCOG04779">
    <property type="taxonomic scope" value="Archaea"/>
</dbReference>
<dbReference type="HOGENOM" id="CLU_021603_1_2_2"/>
<dbReference type="OrthoDB" id="18230at2157"/>
<dbReference type="Proteomes" id="UP000001431">
    <property type="component" value="Chromosome"/>
</dbReference>
<dbReference type="GO" id="GO:0005737">
    <property type="term" value="C:cytoplasm"/>
    <property type="evidence" value="ECO:0007669"/>
    <property type="project" value="TreeGrafter"/>
</dbReference>
<dbReference type="GO" id="GO:0004067">
    <property type="term" value="F:asparaginase activity"/>
    <property type="evidence" value="ECO:0007669"/>
    <property type="project" value="UniProtKB-EC"/>
</dbReference>
<dbReference type="GO" id="GO:0008233">
    <property type="term" value="F:peptidase activity"/>
    <property type="evidence" value="ECO:0007669"/>
    <property type="project" value="UniProtKB-KW"/>
</dbReference>
<dbReference type="GO" id="GO:0006508">
    <property type="term" value="P:proteolysis"/>
    <property type="evidence" value="ECO:0007669"/>
    <property type="project" value="UniProtKB-KW"/>
</dbReference>
<dbReference type="CDD" id="cd14950">
    <property type="entry name" value="Asparaginase_2_like_2"/>
    <property type="match status" value="1"/>
</dbReference>
<dbReference type="FunFam" id="3.60.20.30:FF:000001">
    <property type="entry name" value="Isoaspartyl peptidase/L-asparaginase"/>
    <property type="match status" value="1"/>
</dbReference>
<dbReference type="Gene3D" id="3.60.20.30">
    <property type="entry name" value="(Glycosyl)asparaginase"/>
    <property type="match status" value="1"/>
</dbReference>
<dbReference type="InterPro" id="IPR029055">
    <property type="entry name" value="Ntn_hydrolases_N"/>
</dbReference>
<dbReference type="InterPro" id="IPR000246">
    <property type="entry name" value="Peptidase_T2"/>
</dbReference>
<dbReference type="PANTHER" id="PTHR10188">
    <property type="entry name" value="L-ASPARAGINASE"/>
    <property type="match status" value="1"/>
</dbReference>
<dbReference type="PANTHER" id="PTHR10188:SF6">
    <property type="entry name" value="N(4)-(BETA-N-ACETYLGLUCOSAMINYL)-L-ASPARAGINASE"/>
    <property type="match status" value="1"/>
</dbReference>
<dbReference type="Pfam" id="PF01112">
    <property type="entry name" value="Asparaginase_2"/>
    <property type="match status" value="1"/>
</dbReference>
<dbReference type="SUPFAM" id="SSF56235">
    <property type="entry name" value="N-terminal nucleophile aminohydrolases (Ntn hydrolases)"/>
    <property type="match status" value="1"/>
</dbReference>
<sequence length="299" mass="31641">MTTLVVHGGAGRWAVSEEKRQAVKRALEDAVREGLAAMLRGGAVDGVVAAVEYMEASGLFNAGYGSVYALDGRVYMDAGIMDGKTGRAGAVAAVEGVKSAVRLARAVMELTDHVILAGEGATLLAKRLGLTAPFYKFYSEEKNRQFSQVLEEARQGKWHFKRVLDFADTVGAVALDKDGNLAAATSTGGVWLKLPGRVGDSPLPGAGFWAENGVGAFSATGVGEVIILSTLSLRARDLLEQTGDIRAAVEKAVEYVTRRFGPDTAGLIGVDARGRFAFSYNTRAMARGWGKPGEVRAEL</sequence>
<protein>
    <recommendedName>
        <fullName evidence="4">Plant-type L-asparaginase</fullName>
        <ecNumber evidence="3">3.5.1.1</ecNumber>
    </recommendedName>
    <alternativeName>
        <fullName evidence="5">L-asparagine amidohydrolase</fullName>
    </alternativeName>
    <component>
        <recommendedName>
            <fullName>L-asparaginase subunit alpha</fullName>
        </recommendedName>
    </component>
    <component>
        <recommendedName>
            <fullName>L-asparaginase subunit beta</fullName>
        </recommendedName>
    </component>
</protein>
<comment type="function">
    <text evidence="3">Catalyzes the hydrolysis of L-asparagine into L-aspartate and ammonia (PubMed:30361879). Also displays D-asparaginase activity, which is about 20% of the L-asparaginase activity (PubMed:30361879). Does not exhibit glutaminase activity (PubMed:30361879).</text>
</comment>
<comment type="catalytic activity">
    <reaction evidence="3">
        <text>L-asparagine + H2O = L-aspartate + NH4(+)</text>
        <dbReference type="Rhea" id="RHEA:21016"/>
        <dbReference type="ChEBI" id="CHEBI:15377"/>
        <dbReference type="ChEBI" id="CHEBI:28938"/>
        <dbReference type="ChEBI" id="CHEBI:29991"/>
        <dbReference type="ChEBI" id="CHEBI:58048"/>
        <dbReference type="EC" id="3.5.1.1"/>
    </reaction>
</comment>
<comment type="activity regulation">
    <text evidence="3">Divalent metal ions and EDTA do not have significant effect on enzyme activity, indicating that activity is metal-independent.</text>
</comment>
<comment type="biophysicochemical properties">
    <kinetics>
        <KM evidence="3">4.5 mM for L-asparagine</KM>
        <Vmax evidence="3">355.0 umol/min/mg enzyme</Vmax>
        <text evidence="3">kcat is 374 sec(-1).</text>
    </kinetics>
    <phDependence>
        <text evidence="3">Optimum pH is 6.5.</text>
    </phDependence>
    <temperatureDependence>
        <text evidence="3">Displays activity at a broad temperature range and is highly thermostable (PubMed:30361879). Optimum temperature is at or above 100 degrees Celsius (PubMed:30361879). Shows a half-life of more than 150 minutes at 100 degrees Celsius (PubMed:30361879).</text>
    </temperatureDependence>
</comment>
<comment type="subunit">
    <text evidence="1 3">Heterotetramer of two alpha and two beta chains arranged as a dimer of alpha/beta heterodimers (By similarity). The uncleaved protein forms homodimers (PubMed:30361879).</text>
</comment>
<comment type="PTM">
    <text evidence="2">Autocleaved (By similarity). Generates the alpha and beta subunits (By similarity). The N-terminal residue of the beta subunit is thought to be responsible for the nucleophile hydrolase activity (By similarity).</text>
</comment>
<comment type="similarity">
    <text evidence="5">Belongs to the Ntn-hydrolase family.</text>
</comment>
<keyword id="KW-0068">Autocatalytic cleavage</keyword>
<keyword id="KW-0378">Hydrolase</keyword>
<keyword id="KW-0645">Protease</keyword>
<organism>
    <name type="scientific">Pyrobaculum calidifontis (strain DSM 21063 / JCM 11548 / VA1)</name>
    <dbReference type="NCBI Taxonomy" id="410359"/>
    <lineage>
        <taxon>Archaea</taxon>
        <taxon>Thermoproteota</taxon>
        <taxon>Thermoprotei</taxon>
        <taxon>Thermoproteales</taxon>
        <taxon>Thermoproteaceae</taxon>
        <taxon>Pyrobaculum</taxon>
    </lineage>
</organism>
<name>ASPGP_PYRCJ</name>
<evidence type="ECO:0000250" key="1">
    <source>
        <dbReference type="UniProtKB" id="P37595"/>
    </source>
</evidence>
<evidence type="ECO:0000250" key="2">
    <source>
        <dbReference type="UniProtKB" id="Q5JHT1"/>
    </source>
</evidence>
<evidence type="ECO:0000269" key="3">
    <source>
    </source>
</evidence>
<evidence type="ECO:0000303" key="4">
    <source>
    </source>
</evidence>
<evidence type="ECO:0000305" key="5"/>
<evidence type="ECO:0000312" key="6">
    <source>
        <dbReference type="EMBL" id="ABO08395.1"/>
    </source>
</evidence>
<feature type="chain" id="PRO_0000460245" description="L-asparaginase subunit alpha">
    <location>
        <begin position="1"/>
        <end position="168"/>
    </location>
</feature>
<feature type="chain" id="PRO_0000460246" description="L-asparaginase subunit beta">
    <location>
        <begin position="169"/>
        <end position="299"/>
    </location>
</feature>
<feature type="active site" description="Nucleophile" evidence="1">
    <location>
        <position position="169"/>
    </location>
</feature>
<feature type="binding site" evidence="1">
    <location>
        <begin position="197"/>
        <end position="200"/>
    </location>
    <ligand>
        <name>substrate</name>
    </ligand>
</feature>
<feature type="binding site" evidence="1">
    <location>
        <begin position="220"/>
        <end position="223"/>
    </location>
    <ligand>
        <name>substrate</name>
    </ligand>
</feature>
<feature type="site" description="Cleavage; by autolysis" evidence="1">
    <location>
        <begin position="168"/>
        <end position="169"/>
    </location>
</feature>
<reference key="1">
    <citation type="submission" date="2007-02" db="EMBL/GenBank/DDBJ databases">
        <title>Complete sequence of Pyrobaculum calidifontis JCM 11548.</title>
        <authorList>
            <consortium name="US DOE Joint Genome Institute"/>
            <person name="Copeland A."/>
            <person name="Lucas S."/>
            <person name="Lapidus A."/>
            <person name="Barry K."/>
            <person name="Glavina del Rio T."/>
            <person name="Dalin E."/>
            <person name="Tice H."/>
            <person name="Pitluck S."/>
            <person name="Chain P."/>
            <person name="Malfatti S."/>
            <person name="Shin M."/>
            <person name="Vergez L."/>
            <person name="Schmutz J."/>
            <person name="Larimer F."/>
            <person name="Land M."/>
            <person name="Hauser L."/>
            <person name="Kyrpides N."/>
            <person name="Mikhailova N."/>
            <person name="Cozen A.E."/>
            <person name="Fitz-Gibbon S.T."/>
            <person name="House C.H."/>
            <person name="Saltikov C."/>
            <person name="Lowe T.M."/>
            <person name="Richardson P."/>
        </authorList>
    </citation>
    <scope>NUCLEOTIDE SEQUENCE [LARGE SCALE GENOMIC DNA]</scope>
    <source>
        <strain>DSM 21063 / JCM 11548 / VA1</strain>
    </source>
</reference>
<reference key="2">
    <citation type="journal article" date="2019" name="Folia Microbiol. (Praha)">
        <title>Pcal_0970: an extremely thermostable L-asparaginase from Pyrobaculum calidifontis with no detectable glutaminase activity.</title>
        <authorList>
            <person name="Chohan S.M."/>
            <person name="Rashid N."/>
            <person name="Sajed M."/>
            <person name="Imanaka T."/>
        </authorList>
    </citation>
    <scope>FUNCTION</scope>
    <scope>CATALYTIC ACTIVITY</scope>
    <scope>ACTIVITY REGULATION</scope>
    <scope>BIOPHYSICOCHEMICAL PROPERTIES</scope>
    <scope>SUBUNIT</scope>
    <source>
        <strain>DSM 21063 / JCM 11548 / VA1</strain>
    </source>
</reference>
<gene>
    <name evidence="6" type="ordered locus">Pcal_0970</name>
</gene>